<evidence type="ECO:0000255" key="1">
    <source>
        <dbReference type="HAMAP-Rule" id="MF_01552"/>
    </source>
</evidence>
<evidence type="ECO:0000305" key="2"/>
<proteinExistence type="inferred from homology"/>
<comment type="cofactor">
    <cofactor evidence="1">
        <name>Mg(2+)</name>
        <dbReference type="ChEBI" id="CHEBI:18420"/>
    </cofactor>
    <cofactor evidence="1">
        <name>Mn(2+)</name>
        <dbReference type="ChEBI" id="CHEBI:29035"/>
    </cofactor>
    <text evidence="1">Binds 2 magnesium or manganese ions per subunit.</text>
</comment>
<comment type="similarity">
    <text evidence="1">Belongs to the RimK family.</text>
</comment>
<comment type="sequence caution" evidence="2">
    <conflict type="erroneous initiation">
        <sequence resource="EMBL-CDS" id="ABV13378"/>
    </conflict>
</comment>
<dbReference type="EC" id="6.3.2.-" evidence="1"/>
<dbReference type="EMBL" id="CP000822">
    <property type="protein sequence ID" value="ABV13378.1"/>
    <property type="status" value="ALT_INIT"/>
    <property type="molecule type" value="Genomic_DNA"/>
</dbReference>
<dbReference type="RefSeq" id="WP_024130496.1">
    <property type="nucleotide sequence ID" value="NC_009792.1"/>
</dbReference>
<dbReference type="SMR" id="A8AIR5"/>
<dbReference type="STRING" id="290338.CKO_02255"/>
<dbReference type="GeneID" id="45136176"/>
<dbReference type="KEGG" id="cko:CKO_02255"/>
<dbReference type="HOGENOM" id="CLU_054353_0_1_6"/>
<dbReference type="OrthoDB" id="3865600at2"/>
<dbReference type="Proteomes" id="UP000008148">
    <property type="component" value="Chromosome"/>
</dbReference>
<dbReference type="GO" id="GO:0005737">
    <property type="term" value="C:cytoplasm"/>
    <property type="evidence" value="ECO:0007669"/>
    <property type="project" value="TreeGrafter"/>
</dbReference>
<dbReference type="GO" id="GO:0005524">
    <property type="term" value="F:ATP binding"/>
    <property type="evidence" value="ECO:0007669"/>
    <property type="project" value="UniProtKB-UniRule"/>
</dbReference>
<dbReference type="GO" id="GO:0046872">
    <property type="term" value="F:metal ion binding"/>
    <property type="evidence" value="ECO:0007669"/>
    <property type="project" value="UniProtKB-KW"/>
</dbReference>
<dbReference type="GO" id="GO:0018169">
    <property type="term" value="F:ribosomal S6-glutamic acid ligase activity"/>
    <property type="evidence" value="ECO:0007669"/>
    <property type="project" value="TreeGrafter"/>
</dbReference>
<dbReference type="GO" id="GO:0036211">
    <property type="term" value="P:protein modification process"/>
    <property type="evidence" value="ECO:0007669"/>
    <property type="project" value="InterPro"/>
</dbReference>
<dbReference type="GO" id="GO:0009432">
    <property type="term" value="P:SOS response"/>
    <property type="evidence" value="ECO:0007669"/>
    <property type="project" value="TreeGrafter"/>
</dbReference>
<dbReference type="GO" id="GO:0006412">
    <property type="term" value="P:translation"/>
    <property type="evidence" value="ECO:0007669"/>
    <property type="project" value="UniProtKB-KW"/>
</dbReference>
<dbReference type="FunFam" id="3.40.50.20:FF:000004">
    <property type="entry name" value="Probable alpha-L-glutamate ligase"/>
    <property type="match status" value="1"/>
</dbReference>
<dbReference type="FunFam" id="3.30.1490.20:FF:000005">
    <property type="entry name" value="Probable alpha-L-glutamate ligase 1"/>
    <property type="match status" value="1"/>
</dbReference>
<dbReference type="FunFam" id="3.30.470.20:FF:000016">
    <property type="entry name" value="Ribosomal protein S6--L-glutamate ligase"/>
    <property type="match status" value="1"/>
</dbReference>
<dbReference type="Gene3D" id="3.40.50.20">
    <property type="match status" value="1"/>
</dbReference>
<dbReference type="Gene3D" id="3.30.1490.20">
    <property type="entry name" value="ATP-grasp fold, A domain"/>
    <property type="match status" value="1"/>
</dbReference>
<dbReference type="Gene3D" id="3.30.470.20">
    <property type="entry name" value="ATP-grasp fold, B domain"/>
    <property type="match status" value="1"/>
</dbReference>
<dbReference type="HAMAP" id="MF_01552">
    <property type="entry name" value="RimK"/>
    <property type="match status" value="1"/>
</dbReference>
<dbReference type="InterPro" id="IPR011761">
    <property type="entry name" value="ATP-grasp"/>
</dbReference>
<dbReference type="InterPro" id="IPR013651">
    <property type="entry name" value="ATP-grasp_RimK-type"/>
</dbReference>
<dbReference type="InterPro" id="IPR013815">
    <property type="entry name" value="ATP_grasp_subdomain_1"/>
</dbReference>
<dbReference type="InterPro" id="IPR023533">
    <property type="entry name" value="RimK"/>
</dbReference>
<dbReference type="InterPro" id="IPR041107">
    <property type="entry name" value="Rimk_N"/>
</dbReference>
<dbReference type="InterPro" id="IPR004666">
    <property type="entry name" value="Rp_bS6_RimK/Lys_biosynth_LsyX"/>
</dbReference>
<dbReference type="NCBIfam" id="NF007764">
    <property type="entry name" value="PRK10446.1"/>
    <property type="match status" value="1"/>
</dbReference>
<dbReference type="NCBIfam" id="TIGR00768">
    <property type="entry name" value="rimK_fam"/>
    <property type="match status" value="1"/>
</dbReference>
<dbReference type="PANTHER" id="PTHR21621:SF7">
    <property type="entry name" value="RIBOSOMAL PROTEIN BS6--L-GLUTAMATE LIGASE"/>
    <property type="match status" value="1"/>
</dbReference>
<dbReference type="PANTHER" id="PTHR21621">
    <property type="entry name" value="RIBOSOMAL PROTEIN S6 MODIFICATION PROTEIN"/>
    <property type="match status" value="1"/>
</dbReference>
<dbReference type="Pfam" id="PF08443">
    <property type="entry name" value="RimK"/>
    <property type="match status" value="1"/>
</dbReference>
<dbReference type="Pfam" id="PF18030">
    <property type="entry name" value="Rimk_N"/>
    <property type="match status" value="1"/>
</dbReference>
<dbReference type="SUPFAM" id="SSF56059">
    <property type="entry name" value="Glutathione synthetase ATP-binding domain-like"/>
    <property type="match status" value="1"/>
</dbReference>
<dbReference type="PROSITE" id="PS50975">
    <property type="entry name" value="ATP_GRASP"/>
    <property type="match status" value="1"/>
</dbReference>
<feature type="chain" id="PRO_0000340539" description="Probable alpha-L-glutamate ligase">
    <location>
        <begin position="1"/>
        <end position="300"/>
    </location>
</feature>
<feature type="domain" description="ATP-grasp" evidence="1">
    <location>
        <begin position="104"/>
        <end position="287"/>
    </location>
</feature>
<feature type="binding site" evidence="1">
    <location>
        <position position="141"/>
    </location>
    <ligand>
        <name>ATP</name>
        <dbReference type="ChEBI" id="CHEBI:30616"/>
    </ligand>
</feature>
<feature type="binding site" evidence="1">
    <location>
        <begin position="178"/>
        <end position="179"/>
    </location>
    <ligand>
        <name>ATP</name>
        <dbReference type="ChEBI" id="CHEBI:30616"/>
    </ligand>
</feature>
<feature type="binding site" evidence="1">
    <location>
        <position position="187"/>
    </location>
    <ligand>
        <name>ATP</name>
        <dbReference type="ChEBI" id="CHEBI:30616"/>
    </ligand>
</feature>
<feature type="binding site" evidence="1">
    <location>
        <begin position="211"/>
        <end position="213"/>
    </location>
    <ligand>
        <name>ATP</name>
        <dbReference type="ChEBI" id="CHEBI:30616"/>
    </ligand>
</feature>
<feature type="binding site" evidence="1">
    <location>
        <position position="248"/>
    </location>
    <ligand>
        <name>Mg(2+)</name>
        <dbReference type="ChEBI" id="CHEBI:18420"/>
        <label>1</label>
    </ligand>
</feature>
<feature type="binding site" evidence="1">
    <location>
        <position position="248"/>
    </location>
    <ligand>
        <name>Mn(2+)</name>
        <dbReference type="ChEBI" id="CHEBI:29035"/>
        <label>1</label>
    </ligand>
</feature>
<feature type="binding site" evidence="1">
    <location>
        <position position="260"/>
    </location>
    <ligand>
        <name>Mg(2+)</name>
        <dbReference type="ChEBI" id="CHEBI:18420"/>
        <label>1</label>
    </ligand>
</feature>
<feature type="binding site" evidence="1">
    <location>
        <position position="260"/>
    </location>
    <ligand>
        <name>Mg(2+)</name>
        <dbReference type="ChEBI" id="CHEBI:18420"/>
        <label>2</label>
    </ligand>
</feature>
<feature type="binding site" evidence="1">
    <location>
        <position position="260"/>
    </location>
    <ligand>
        <name>Mn(2+)</name>
        <dbReference type="ChEBI" id="CHEBI:29035"/>
        <label>1</label>
    </ligand>
</feature>
<feature type="binding site" evidence="1">
    <location>
        <position position="260"/>
    </location>
    <ligand>
        <name>Mn(2+)</name>
        <dbReference type="ChEBI" id="CHEBI:29035"/>
        <label>2</label>
    </ligand>
</feature>
<feature type="binding site" evidence="1">
    <location>
        <position position="262"/>
    </location>
    <ligand>
        <name>Mg(2+)</name>
        <dbReference type="ChEBI" id="CHEBI:18420"/>
        <label>2</label>
    </ligand>
</feature>
<feature type="binding site" evidence="1">
    <location>
        <position position="262"/>
    </location>
    <ligand>
        <name>Mn(2+)</name>
        <dbReference type="ChEBI" id="CHEBI:29035"/>
        <label>2</label>
    </ligand>
</feature>
<accession>A8AIR5</accession>
<gene>
    <name evidence="1" type="primary">rimK</name>
    <name type="ordered locus">CKO_02255</name>
</gene>
<sequence>MKIAILSRDGTLYSCKRLREAAMKRGHLVEILDPLSCYMNISPAASSIHYKGRQLPHFDAVIPRIGSAITFYGTAALRQFEMLGSYPLNESVAITRARDKLRSLQLLARQGIDLPVTGIAHSPDDTSDLIDMVGGAPLVVKLVEGTQGIGVVLAETRQAAESVIDAFRGLNAHILVQEYIKEARGRDIRCLVVGDEVVAAIERRAKEGDFRSNLHRGGMASIASITPREREIAIKAAQTMGLDVAGVDILRAERGPLVMEVNASPGLEGVEKTTGVDIAGRMIQWIERHATPEFCLKTGG</sequence>
<reference key="1">
    <citation type="submission" date="2007-08" db="EMBL/GenBank/DDBJ databases">
        <authorList>
            <consortium name="The Citrobacter koseri Genome Sequencing Project"/>
            <person name="McClelland M."/>
            <person name="Sanderson E.K."/>
            <person name="Porwollik S."/>
            <person name="Spieth J."/>
            <person name="Clifton W.S."/>
            <person name="Latreille P."/>
            <person name="Courtney L."/>
            <person name="Wang C."/>
            <person name="Pepin K."/>
            <person name="Bhonagiri V."/>
            <person name="Nash W."/>
            <person name="Johnson M."/>
            <person name="Thiruvilangam P."/>
            <person name="Wilson R."/>
        </authorList>
    </citation>
    <scope>NUCLEOTIDE SEQUENCE [LARGE SCALE GENOMIC DNA]</scope>
    <source>
        <strain>ATCC BAA-895 / CDC 4225-83 / SGSC4696</strain>
    </source>
</reference>
<protein>
    <recommendedName>
        <fullName evidence="1">Probable alpha-L-glutamate ligase</fullName>
        <ecNumber evidence="1">6.3.2.-</ecNumber>
    </recommendedName>
</protein>
<organism>
    <name type="scientific">Citrobacter koseri (strain ATCC BAA-895 / CDC 4225-83 / SGSC4696)</name>
    <dbReference type="NCBI Taxonomy" id="290338"/>
    <lineage>
        <taxon>Bacteria</taxon>
        <taxon>Pseudomonadati</taxon>
        <taxon>Pseudomonadota</taxon>
        <taxon>Gammaproteobacteria</taxon>
        <taxon>Enterobacterales</taxon>
        <taxon>Enterobacteriaceae</taxon>
        <taxon>Citrobacter</taxon>
    </lineage>
</organism>
<name>RIMK_CITK8</name>
<keyword id="KW-0067">ATP-binding</keyword>
<keyword id="KW-0436">Ligase</keyword>
<keyword id="KW-0460">Magnesium</keyword>
<keyword id="KW-0464">Manganese</keyword>
<keyword id="KW-0479">Metal-binding</keyword>
<keyword id="KW-0547">Nucleotide-binding</keyword>
<keyword id="KW-0648">Protein biosynthesis</keyword>
<keyword id="KW-1185">Reference proteome</keyword>